<accession>B1Z9C7</accession>
<reference key="1">
    <citation type="submission" date="2008-04" db="EMBL/GenBank/DDBJ databases">
        <title>Complete sequence of chromosome of Methylobacterium populi BJ001.</title>
        <authorList>
            <consortium name="US DOE Joint Genome Institute"/>
            <person name="Copeland A."/>
            <person name="Lucas S."/>
            <person name="Lapidus A."/>
            <person name="Glavina del Rio T."/>
            <person name="Dalin E."/>
            <person name="Tice H."/>
            <person name="Bruce D."/>
            <person name="Goodwin L."/>
            <person name="Pitluck S."/>
            <person name="Chertkov O."/>
            <person name="Brettin T."/>
            <person name="Detter J.C."/>
            <person name="Han C."/>
            <person name="Kuske C.R."/>
            <person name="Schmutz J."/>
            <person name="Larimer F."/>
            <person name="Land M."/>
            <person name="Hauser L."/>
            <person name="Kyrpides N."/>
            <person name="Mikhailova N."/>
            <person name="Marx C."/>
            <person name="Richardson P."/>
        </authorList>
    </citation>
    <scope>NUCLEOTIDE SEQUENCE [LARGE SCALE GENOMIC DNA]</scope>
    <source>
        <strain>ATCC BAA-705 / NCIMB 13946 / BJ001</strain>
    </source>
</reference>
<protein>
    <recommendedName>
        <fullName evidence="1">ATP-dependent Clp protease proteolytic subunit</fullName>
        <ecNumber evidence="1">3.4.21.92</ecNumber>
    </recommendedName>
    <alternativeName>
        <fullName evidence="1">Endopeptidase Clp</fullName>
    </alternativeName>
</protein>
<proteinExistence type="inferred from homology"/>
<organism>
    <name type="scientific">Methylorubrum populi (strain ATCC BAA-705 / NCIMB 13946 / BJ001)</name>
    <name type="common">Methylobacterium populi</name>
    <dbReference type="NCBI Taxonomy" id="441620"/>
    <lineage>
        <taxon>Bacteria</taxon>
        <taxon>Pseudomonadati</taxon>
        <taxon>Pseudomonadota</taxon>
        <taxon>Alphaproteobacteria</taxon>
        <taxon>Hyphomicrobiales</taxon>
        <taxon>Methylobacteriaceae</taxon>
        <taxon>Methylorubrum</taxon>
    </lineage>
</organism>
<gene>
    <name evidence="1" type="primary">clpP</name>
    <name type="ordered locus">Mpop_2371</name>
</gene>
<feature type="chain" id="PRO_1000189656" description="ATP-dependent Clp protease proteolytic subunit">
    <location>
        <begin position="1"/>
        <end position="208"/>
    </location>
</feature>
<feature type="active site" description="Nucleophile" evidence="1">
    <location>
        <position position="107"/>
    </location>
</feature>
<feature type="active site" evidence="1">
    <location>
        <position position="132"/>
    </location>
</feature>
<comment type="function">
    <text evidence="1">Cleaves peptides in various proteins in a process that requires ATP hydrolysis. Has a chymotrypsin-like activity. Plays a major role in the degradation of misfolded proteins.</text>
</comment>
<comment type="catalytic activity">
    <reaction evidence="1">
        <text>Hydrolysis of proteins to small peptides in the presence of ATP and magnesium. alpha-casein is the usual test substrate. In the absence of ATP, only oligopeptides shorter than five residues are hydrolyzed (such as succinyl-Leu-Tyr-|-NHMec, and Leu-Tyr-Leu-|-Tyr-Trp, in which cleavage of the -Tyr-|-Leu- and -Tyr-|-Trp bonds also occurs).</text>
        <dbReference type="EC" id="3.4.21.92"/>
    </reaction>
</comment>
<comment type="subunit">
    <text evidence="1">Fourteen ClpP subunits assemble into 2 heptameric rings which stack back to back to give a disk-like structure with a central cavity, resembling the structure of eukaryotic proteasomes.</text>
</comment>
<comment type="subcellular location">
    <subcellularLocation>
        <location evidence="1">Cytoplasm</location>
    </subcellularLocation>
</comment>
<comment type="similarity">
    <text evidence="1">Belongs to the peptidase S14 family.</text>
</comment>
<sequence length="208" mass="23084">MRDPVDYFHNSLVPMVVEQSSRGERAFDIYSRLLRERIIFLTGPVEDQGASLIVAQLLFLEAENPKKEISFYINSPGGVVTSGLSIYDTMQFIRCPVTTLCVGQAASMGSLLLAAGEAGHRFALPNARIMVHQPSGGFQGQATDILIHAREIEALKKRLNEIYVKHTGRDYETIHQALERDNFMTADAAKEFGLIDDILHKRPEPAAA</sequence>
<keyword id="KW-0963">Cytoplasm</keyword>
<keyword id="KW-0378">Hydrolase</keyword>
<keyword id="KW-0645">Protease</keyword>
<keyword id="KW-0720">Serine protease</keyword>
<name>CLPP_METPB</name>
<dbReference type="EC" id="3.4.21.92" evidence="1"/>
<dbReference type="EMBL" id="CP001029">
    <property type="protein sequence ID" value="ACB80533.1"/>
    <property type="molecule type" value="Genomic_DNA"/>
</dbReference>
<dbReference type="RefSeq" id="WP_012454265.1">
    <property type="nucleotide sequence ID" value="NC_010725.1"/>
</dbReference>
<dbReference type="SMR" id="B1Z9C7"/>
<dbReference type="STRING" id="441620.Mpop_2371"/>
<dbReference type="MEROPS" id="S14.001"/>
<dbReference type="KEGG" id="mpo:Mpop_2371"/>
<dbReference type="eggNOG" id="COG0740">
    <property type="taxonomic scope" value="Bacteria"/>
</dbReference>
<dbReference type="HOGENOM" id="CLU_058707_3_3_5"/>
<dbReference type="OrthoDB" id="9802800at2"/>
<dbReference type="Proteomes" id="UP000007136">
    <property type="component" value="Chromosome"/>
</dbReference>
<dbReference type="GO" id="GO:0005737">
    <property type="term" value="C:cytoplasm"/>
    <property type="evidence" value="ECO:0007669"/>
    <property type="project" value="UniProtKB-SubCell"/>
</dbReference>
<dbReference type="GO" id="GO:0009368">
    <property type="term" value="C:endopeptidase Clp complex"/>
    <property type="evidence" value="ECO:0007669"/>
    <property type="project" value="TreeGrafter"/>
</dbReference>
<dbReference type="GO" id="GO:0004176">
    <property type="term" value="F:ATP-dependent peptidase activity"/>
    <property type="evidence" value="ECO:0007669"/>
    <property type="project" value="InterPro"/>
</dbReference>
<dbReference type="GO" id="GO:0051117">
    <property type="term" value="F:ATPase binding"/>
    <property type="evidence" value="ECO:0007669"/>
    <property type="project" value="TreeGrafter"/>
</dbReference>
<dbReference type="GO" id="GO:0004252">
    <property type="term" value="F:serine-type endopeptidase activity"/>
    <property type="evidence" value="ECO:0007669"/>
    <property type="project" value="UniProtKB-UniRule"/>
</dbReference>
<dbReference type="GO" id="GO:0006515">
    <property type="term" value="P:protein quality control for misfolded or incompletely synthesized proteins"/>
    <property type="evidence" value="ECO:0007669"/>
    <property type="project" value="TreeGrafter"/>
</dbReference>
<dbReference type="CDD" id="cd07017">
    <property type="entry name" value="S14_ClpP_2"/>
    <property type="match status" value="1"/>
</dbReference>
<dbReference type="FunFam" id="3.90.226.10:FF:000001">
    <property type="entry name" value="ATP-dependent Clp protease proteolytic subunit"/>
    <property type="match status" value="1"/>
</dbReference>
<dbReference type="Gene3D" id="3.90.226.10">
    <property type="entry name" value="2-enoyl-CoA Hydratase, Chain A, domain 1"/>
    <property type="match status" value="1"/>
</dbReference>
<dbReference type="HAMAP" id="MF_00444">
    <property type="entry name" value="ClpP"/>
    <property type="match status" value="1"/>
</dbReference>
<dbReference type="InterPro" id="IPR001907">
    <property type="entry name" value="ClpP"/>
</dbReference>
<dbReference type="InterPro" id="IPR029045">
    <property type="entry name" value="ClpP/crotonase-like_dom_sf"/>
</dbReference>
<dbReference type="InterPro" id="IPR023562">
    <property type="entry name" value="ClpP/TepA"/>
</dbReference>
<dbReference type="InterPro" id="IPR033135">
    <property type="entry name" value="ClpP_His_AS"/>
</dbReference>
<dbReference type="InterPro" id="IPR018215">
    <property type="entry name" value="ClpP_Ser_AS"/>
</dbReference>
<dbReference type="NCBIfam" id="NF001368">
    <property type="entry name" value="PRK00277.1"/>
    <property type="match status" value="1"/>
</dbReference>
<dbReference type="NCBIfam" id="NF009205">
    <property type="entry name" value="PRK12553.1"/>
    <property type="match status" value="1"/>
</dbReference>
<dbReference type="PANTHER" id="PTHR10381">
    <property type="entry name" value="ATP-DEPENDENT CLP PROTEASE PROTEOLYTIC SUBUNIT"/>
    <property type="match status" value="1"/>
</dbReference>
<dbReference type="PANTHER" id="PTHR10381:SF70">
    <property type="entry name" value="ATP-DEPENDENT CLP PROTEASE PROTEOLYTIC SUBUNIT"/>
    <property type="match status" value="1"/>
</dbReference>
<dbReference type="Pfam" id="PF00574">
    <property type="entry name" value="CLP_protease"/>
    <property type="match status" value="1"/>
</dbReference>
<dbReference type="PRINTS" id="PR00127">
    <property type="entry name" value="CLPPROTEASEP"/>
</dbReference>
<dbReference type="SUPFAM" id="SSF52096">
    <property type="entry name" value="ClpP/crotonase"/>
    <property type="match status" value="1"/>
</dbReference>
<dbReference type="PROSITE" id="PS00382">
    <property type="entry name" value="CLP_PROTEASE_HIS"/>
    <property type="match status" value="1"/>
</dbReference>
<dbReference type="PROSITE" id="PS00381">
    <property type="entry name" value="CLP_PROTEASE_SER"/>
    <property type="match status" value="1"/>
</dbReference>
<evidence type="ECO:0000255" key="1">
    <source>
        <dbReference type="HAMAP-Rule" id="MF_00444"/>
    </source>
</evidence>